<proteinExistence type="uncertain"/>
<protein>
    <recommendedName>
        <fullName>Putative uncharacterized protein encoded by LINC01387</fullName>
    </recommendedName>
</protein>
<sequence length="135" mass="14903">MVPAPPFLGVLENPVPQWDLSILGSIRIRVSHTEVQGSGSSRSPEALRKESLEVEWTLVLLAIPPRIQPSQQDGGPPKCCDLLRAALLGRHCPLCVPAGEVFSQKRDNEQDRSEFIGQTLKLLVKRNVSLELSCR</sequence>
<reference key="1">
    <citation type="journal article" date="2005" name="Nature">
        <title>DNA sequence and analysis of human chromosome 18.</title>
        <authorList>
            <person name="Nusbaum C."/>
            <person name="Zody M.C."/>
            <person name="Borowsky M.L."/>
            <person name="Kamal M."/>
            <person name="Kodira C.D."/>
            <person name="Taylor T.D."/>
            <person name="Whittaker C.A."/>
            <person name="Chang J.L."/>
            <person name="Cuomo C.A."/>
            <person name="Dewar K."/>
            <person name="FitzGerald M.G."/>
            <person name="Yang X."/>
            <person name="Abouelleil A."/>
            <person name="Allen N.R."/>
            <person name="Anderson S."/>
            <person name="Bloom T."/>
            <person name="Bugalter B."/>
            <person name="Butler J."/>
            <person name="Cook A."/>
            <person name="DeCaprio D."/>
            <person name="Engels R."/>
            <person name="Garber M."/>
            <person name="Gnirke A."/>
            <person name="Hafez N."/>
            <person name="Hall J.L."/>
            <person name="Norman C.H."/>
            <person name="Itoh T."/>
            <person name="Jaffe D.B."/>
            <person name="Kuroki Y."/>
            <person name="Lehoczky J."/>
            <person name="Lui A."/>
            <person name="Macdonald P."/>
            <person name="Mauceli E."/>
            <person name="Mikkelsen T.S."/>
            <person name="Naylor J.W."/>
            <person name="Nicol R."/>
            <person name="Nguyen C."/>
            <person name="Noguchi H."/>
            <person name="O'Leary S.B."/>
            <person name="Piqani B."/>
            <person name="Smith C.L."/>
            <person name="Talamas J.A."/>
            <person name="Topham K."/>
            <person name="Totoki Y."/>
            <person name="Toyoda A."/>
            <person name="Wain H.M."/>
            <person name="Young S.K."/>
            <person name="Zeng Q."/>
            <person name="Zimmer A.R."/>
            <person name="Fujiyama A."/>
            <person name="Hattori M."/>
            <person name="Birren B.W."/>
            <person name="Sakaki Y."/>
            <person name="Lander E.S."/>
        </authorList>
    </citation>
    <scope>NUCLEOTIDE SEQUENCE [LARGE SCALE GENOMIC DNA]</scope>
</reference>
<reference key="2">
    <citation type="journal article" date="2006" name="DNA Res.">
        <title>Identification of genes related to Parkinson's disease using expressed sequence tags.</title>
        <authorList>
            <person name="Kim J.M."/>
            <person name="Lee K.H."/>
            <person name="Jeon Y.J."/>
            <person name="Oh J.H."/>
            <person name="Jeong S.Y."/>
            <person name="Song I.S."/>
            <person name="Kim J.M."/>
            <person name="Lee D.S."/>
            <person name="Kim N.S."/>
        </authorList>
    </citation>
    <scope>NUCLEOTIDE SEQUENCE [LARGE SCALE MRNA]</scope>
</reference>
<accession>J3KSC0</accession>
<feature type="chain" id="PRO_0000422831" description="Putative uncharacterized protein encoded by LINC01387">
    <location>
        <begin position="1"/>
        <end position="135"/>
    </location>
</feature>
<name>CR064_HUMAN</name>
<keyword id="KW-1185">Reference proteome</keyword>
<dbReference type="EMBL" id="AP001166">
    <property type="status" value="NOT_ANNOTATED_CDS"/>
    <property type="molecule type" value="Genomic_DNA"/>
</dbReference>
<dbReference type="EMBL" id="AP005202">
    <property type="status" value="NOT_ANNOTATED_CDS"/>
    <property type="molecule type" value="Genomic_DNA"/>
</dbReference>
<dbReference type="EMBL" id="DT218598">
    <property type="status" value="NOT_ANNOTATED_CDS"/>
    <property type="molecule type" value="mRNA"/>
</dbReference>
<dbReference type="BioMuta" id="HGNC:44660"/>
<dbReference type="AGR" id="HGNC:44660"/>
<dbReference type="GeneCards" id="LINC01387"/>
<dbReference type="HGNC" id="HGNC:44660">
    <property type="gene designation" value="LINC01387"/>
</dbReference>
<dbReference type="neXtProt" id="NX_J3KSC0"/>
<dbReference type="InParanoid" id="J3KSC0"/>
<dbReference type="PAN-GO" id="J3KSC0">
    <property type="GO annotations" value="0 GO annotations based on evolutionary models"/>
</dbReference>
<dbReference type="ChiTaRS" id="LINC01387">
    <property type="organism name" value="human"/>
</dbReference>
<dbReference type="Pharos" id="J3KSC0">
    <property type="development level" value="Tdark"/>
</dbReference>
<dbReference type="Proteomes" id="UP000005640">
    <property type="component" value="Unplaced"/>
</dbReference>
<dbReference type="RNAct" id="J3KSC0">
    <property type="molecule type" value="protein"/>
</dbReference>
<organism>
    <name type="scientific">Homo sapiens</name>
    <name type="common">Human</name>
    <dbReference type="NCBI Taxonomy" id="9606"/>
    <lineage>
        <taxon>Eukaryota</taxon>
        <taxon>Metazoa</taxon>
        <taxon>Chordata</taxon>
        <taxon>Craniata</taxon>
        <taxon>Vertebrata</taxon>
        <taxon>Euteleostomi</taxon>
        <taxon>Mammalia</taxon>
        <taxon>Eutheria</taxon>
        <taxon>Euarchontoglires</taxon>
        <taxon>Primates</taxon>
        <taxon>Haplorrhini</taxon>
        <taxon>Catarrhini</taxon>
        <taxon>Hominidae</taxon>
        <taxon>Homo</taxon>
    </lineage>
</organism>
<comment type="caution">
    <text evidence="1">Product of a dubious gene prediction.</text>
</comment>
<gene>
    <name type="primary">LINC01387</name>
    <name type="synonym">C18orf64</name>
</gene>
<evidence type="ECO:0000305" key="1"/>